<organism>
    <name type="scientific">Thauera aromatica</name>
    <dbReference type="NCBI Taxonomy" id="59405"/>
    <lineage>
        <taxon>Bacteria</taxon>
        <taxon>Pseudomonadati</taxon>
        <taxon>Pseudomonadota</taxon>
        <taxon>Betaproteobacteria</taxon>
        <taxon>Rhodocyclales</taxon>
        <taxon>Zoogloeaceae</taxon>
        <taxon>Thauera</taxon>
    </lineage>
</organism>
<reference key="1">
    <citation type="journal article" date="1998" name="Mol. Microbiol.">
        <title>Biochemical and genetic characterization of benzylsuccinate synthase from Thauera aromatica: a new glycyl radical enzyme catalysing the first step in anaerobic toluene metabolism.</title>
        <authorList>
            <person name="Leuthner B."/>
            <person name="Leutwein C."/>
            <person name="Schulz H."/>
            <person name="Horth P."/>
            <person name="Haehnel W."/>
            <person name="Schiltz E."/>
            <person name="Schagger H."/>
            <person name="Heider J."/>
        </authorList>
    </citation>
    <scope>NUCLEOTIDE SEQUENCE [GENOMIC DNA]</scope>
    <source>
        <strain>DSM 6984 / CIP 107765 / K172</strain>
    </source>
</reference>
<reference key="2">
    <citation type="journal article" date="2002" name="Arch. Microbiol.">
        <title>Operon structure and expression of the genes for benzylsuccinate synthase in Thauera aromatica strain K172.</title>
        <authorList>
            <person name="Hermuth K."/>
            <person name="Leuthner B."/>
            <person name="Heider J."/>
        </authorList>
    </citation>
    <scope>FUNCTION</scope>
    <scope>INDUCTION</scope>
    <source>
        <strain>DSM 6984 / CIP 107765 / K172</strain>
    </source>
</reference>
<evidence type="ECO:0000255" key="1"/>
<evidence type="ECO:0000269" key="2">
    <source>
    </source>
</evidence>
<evidence type="ECO:0000305" key="3"/>
<keyword id="KW-0058">Aromatic hydrocarbons catabolism</keyword>
<keyword id="KW-0067">ATP-binding</keyword>
<keyword id="KW-0143">Chaperone</keyword>
<keyword id="KW-0547">Nucleotide-binding</keyword>
<dbReference type="EMBL" id="AJ001848">
    <property type="protein sequence ID" value="CAD12889.1"/>
    <property type="molecule type" value="Genomic_DNA"/>
</dbReference>
<dbReference type="SMR" id="Q8VVE4"/>
<dbReference type="GO" id="GO:0005524">
    <property type="term" value="F:ATP binding"/>
    <property type="evidence" value="ECO:0007669"/>
    <property type="project" value="UniProtKB-KW"/>
</dbReference>
<dbReference type="GO" id="GO:0016887">
    <property type="term" value="F:ATP hydrolysis activity"/>
    <property type="evidence" value="ECO:0007669"/>
    <property type="project" value="InterPro"/>
</dbReference>
<dbReference type="GO" id="GO:0009056">
    <property type="term" value="P:catabolic process"/>
    <property type="evidence" value="ECO:0007669"/>
    <property type="project" value="UniProtKB-KW"/>
</dbReference>
<dbReference type="Gene3D" id="3.40.50.300">
    <property type="entry name" value="P-loop containing nucleotide triphosphate hydrolases"/>
    <property type="match status" value="1"/>
</dbReference>
<dbReference type="InterPro" id="IPR011704">
    <property type="entry name" value="ATPase_dyneun-rel_AAA"/>
</dbReference>
<dbReference type="InterPro" id="IPR050764">
    <property type="entry name" value="CbbQ/NirQ/NorQ/GpvN"/>
</dbReference>
<dbReference type="InterPro" id="IPR013615">
    <property type="entry name" value="CbbQ_C"/>
</dbReference>
<dbReference type="InterPro" id="IPR027417">
    <property type="entry name" value="P-loop_NTPase"/>
</dbReference>
<dbReference type="PANTHER" id="PTHR42759:SF1">
    <property type="entry name" value="MAGNESIUM-CHELATASE SUBUNIT CHLD"/>
    <property type="match status" value="1"/>
</dbReference>
<dbReference type="PANTHER" id="PTHR42759">
    <property type="entry name" value="MOXR FAMILY PROTEIN"/>
    <property type="match status" value="1"/>
</dbReference>
<dbReference type="Pfam" id="PF07728">
    <property type="entry name" value="AAA_5"/>
    <property type="match status" value="1"/>
</dbReference>
<dbReference type="Pfam" id="PF08406">
    <property type="entry name" value="CbbQ_C"/>
    <property type="match status" value="1"/>
</dbReference>
<dbReference type="SUPFAM" id="SSF52540">
    <property type="entry name" value="P-loop containing nucleoside triphosphate hydrolases"/>
    <property type="match status" value="1"/>
</dbReference>
<comment type="function">
    <text evidence="2">May have a role in assembly and/or activation of benzylsuccinate synthase.</text>
</comment>
<comment type="induction">
    <text evidence="2">Induced by toluene.</text>
</comment>
<comment type="similarity">
    <text evidence="3">Belongs to the CbbQ/NirQ/NorQ/GpvN family.</text>
</comment>
<proteinExistence type="evidence at transcript level"/>
<accession>Q8VVE4</accession>
<sequence length="286" mass="31721">MKNSGLLNSVHVPAADPYYYLNTETLSLLNRIQRISQKHPVNVLVIGKQGCGKSSLVRQYAAVHHLPLATFQIGLLSEPGQLFGEYALENGETRYKQFLFPQAIQTPGCVIHLEEINRPEHPKALNMLFSILSDDRQVWMDELGLLKVADGVVFFATLNEGDEFVGTELLDPALRDRFYVTAMDFLPNDVEREVLQKKTGVTIAQAEEIIGVVNSLRASPELGVEVSTRKTLMIGEMIAAGGSLREAIAASLQTDRETLESVLLSLHVELGKTERGTTEYVLFTPR</sequence>
<protein>
    <recommendedName>
        <fullName>Putative chaperone BssE</fullName>
    </recommendedName>
</protein>
<gene>
    <name type="primary">bssE</name>
</gene>
<feature type="chain" id="PRO_0000418877" description="Putative chaperone BssE">
    <location>
        <begin position="1"/>
        <end position="286"/>
    </location>
</feature>
<feature type="binding site" evidence="1">
    <location>
        <begin position="47"/>
        <end position="54"/>
    </location>
    <ligand>
        <name>ATP</name>
        <dbReference type="ChEBI" id="CHEBI:30616"/>
    </ligand>
</feature>
<feature type="binding site" evidence="1">
    <location>
        <begin position="108"/>
        <end position="115"/>
    </location>
    <ligand>
        <name>ATP</name>
        <dbReference type="ChEBI" id="CHEBI:30616"/>
    </ligand>
</feature>
<name>BSSE_THAAR</name>